<organism>
    <name type="scientific">Pelargonium hortorum</name>
    <name type="common">Common geranium</name>
    <name type="synonym">Pelargonium inquinans x Pelargonium zonale</name>
    <dbReference type="NCBI Taxonomy" id="4031"/>
    <lineage>
        <taxon>Eukaryota</taxon>
        <taxon>Viridiplantae</taxon>
        <taxon>Streptophyta</taxon>
        <taxon>Embryophyta</taxon>
        <taxon>Tracheophyta</taxon>
        <taxon>Spermatophyta</taxon>
        <taxon>Magnoliopsida</taxon>
        <taxon>eudicotyledons</taxon>
        <taxon>Gunneridae</taxon>
        <taxon>Pentapetalae</taxon>
        <taxon>rosids</taxon>
        <taxon>malvids</taxon>
        <taxon>Geraniales</taxon>
        <taxon>Geraniaceae</taxon>
        <taxon>Pelargonium</taxon>
    </lineage>
</organism>
<geneLocation type="chloroplast"/>
<keyword id="KW-0150">Chloroplast</keyword>
<keyword id="KW-0472">Membrane</keyword>
<keyword id="KW-0602">Photosynthesis</keyword>
<keyword id="KW-0604">Photosystem II</keyword>
<keyword id="KW-0934">Plastid</keyword>
<keyword id="KW-0674">Reaction center</keyword>
<keyword id="KW-0793">Thylakoid</keyword>
<keyword id="KW-0812">Transmembrane</keyword>
<keyword id="KW-1133">Transmembrane helix</keyword>
<comment type="function">
    <text evidence="1">One of the components of the core complex of photosystem II (PSII). PSII is a light-driven water:plastoquinone oxidoreductase that uses light energy to abstract electrons from H(2)O, generating O(2) and a proton gradient subsequently used for ATP formation. It consists of a core antenna complex that captures photons, and an electron transfer chain that converts photonic excitation into a charge separation.</text>
</comment>
<comment type="subunit">
    <text evidence="1">PSII is composed of 1 copy each of membrane proteins PsbA, PsbB, PsbC, PsbD, PsbE, PsbF, PsbH, PsbI, PsbJ, PsbK, PsbL, PsbM, PsbT, PsbX, PsbY, PsbZ, Psb30/Ycf12, at least 3 peripheral proteins of the oxygen-evolving complex and a large number of cofactors. It forms dimeric complexes.</text>
</comment>
<comment type="subcellular location">
    <subcellularLocation>
        <location evidence="1">Plastid</location>
        <location evidence="1">Chloroplast thylakoid membrane</location>
        <topology evidence="1">Single-pass membrane protein</topology>
    </subcellularLocation>
</comment>
<comment type="similarity">
    <text evidence="1">Belongs to the PsbJ family.</text>
</comment>
<evidence type="ECO:0000255" key="1">
    <source>
        <dbReference type="HAMAP-Rule" id="MF_01305"/>
    </source>
</evidence>
<name>PSBJ_PELHO</name>
<gene>
    <name evidence="1" type="primary">psbJ-A</name>
</gene>
<gene>
    <name evidence="1" type="primary">psbJ-B</name>
</gene>
<dbReference type="EMBL" id="DQ897681">
    <property type="protein sequence ID" value="ABI17278.1"/>
    <property type="molecule type" value="Genomic_DNA"/>
</dbReference>
<dbReference type="EMBL" id="DQ897681">
    <property type="protein sequence ID" value="ABI17360.1"/>
    <property type="molecule type" value="Genomic_DNA"/>
</dbReference>
<dbReference type="SMR" id="Q06FL2"/>
<dbReference type="GO" id="GO:0009535">
    <property type="term" value="C:chloroplast thylakoid membrane"/>
    <property type="evidence" value="ECO:0007669"/>
    <property type="project" value="UniProtKB-SubCell"/>
</dbReference>
<dbReference type="GO" id="GO:0009539">
    <property type="term" value="C:photosystem II reaction center"/>
    <property type="evidence" value="ECO:0007669"/>
    <property type="project" value="InterPro"/>
</dbReference>
<dbReference type="GO" id="GO:0015979">
    <property type="term" value="P:photosynthesis"/>
    <property type="evidence" value="ECO:0007669"/>
    <property type="project" value="UniProtKB-UniRule"/>
</dbReference>
<dbReference type="Gene3D" id="6.10.250.2070">
    <property type="match status" value="1"/>
</dbReference>
<dbReference type="HAMAP" id="MF_01305">
    <property type="entry name" value="PSII_PsbJ"/>
    <property type="match status" value="1"/>
</dbReference>
<dbReference type="InterPro" id="IPR002682">
    <property type="entry name" value="PSII_PsbJ"/>
</dbReference>
<dbReference type="InterPro" id="IPR037267">
    <property type="entry name" value="PSII_PsbJ_sf"/>
</dbReference>
<dbReference type="NCBIfam" id="NF002722">
    <property type="entry name" value="PRK02565.1"/>
    <property type="match status" value="1"/>
</dbReference>
<dbReference type="PANTHER" id="PTHR34812">
    <property type="entry name" value="PHOTOSYSTEM II REACTION CENTER PROTEIN J"/>
    <property type="match status" value="1"/>
</dbReference>
<dbReference type="PANTHER" id="PTHR34812:SF3">
    <property type="entry name" value="PHOTOSYSTEM II REACTION CENTER PROTEIN J"/>
    <property type="match status" value="1"/>
</dbReference>
<dbReference type="Pfam" id="PF01788">
    <property type="entry name" value="PsbJ"/>
    <property type="match status" value="1"/>
</dbReference>
<dbReference type="SUPFAM" id="SSF161021">
    <property type="entry name" value="Photosystem II reaction center protein J, PsbJ"/>
    <property type="match status" value="1"/>
</dbReference>
<protein>
    <recommendedName>
        <fullName evidence="1">Photosystem II reaction center protein J</fullName>
        <shortName evidence="1">PSII-J</shortName>
    </recommendedName>
</protein>
<sequence>MADTTGRIPLWIIGTVAGIPVIGLIGIFFYGSYSGLGSSL</sequence>
<feature type="chain" id="PRO_0000276107" description="Photosystem II reaction center protein J">
    <location>
        <begin position="1"/>
        <end position="40"/>
    </location>
</feature>
<feature type="transmembrane region" description="Helical" evidence="1">
    <location>
        <begin position="8"/>
        <end position="28"/>
    </location>
</feature>
<reference key="1">
    <citation type="journal article" date="2006" name="Mol. Biol. Evol.">
        <title>The complete chloroplast genome sequence of Pelargonium x hortorum: organization and evolution of the largest and most highly rearranged chloroplast genome of land plants.</title>
        <authorList>
            <person name="Chumley T.W."/>
            <person name="Palmer J.D."/>
            <person name="Mower J.P."/>
            <person name="Fourcade H.M."/>
            <person name="Calie P.J."/>
            <person name="Boore J.L."/>
            <person name="Jansen R.K."/>
        </authorList>
    </citation>
    <scope>NUCLEOTIDE SEQUENCE [LARGE SCALE GENOMIC DNA]</scope>
    <source>
        <strain>cv. Ringo White</strain>
    </source>
</reference>
<proteinExistence type="inferred from homology"/>
<accession>Q06FL2</accession>